<organism>
    <name type="scientific">Mus musculus</name>
    <name type="common">Mouse</name>
    <dbReference type="NCBI Taxonomy" id="10090"/>
    <lineage>
        <taxon>Eukaryota</taxon>
        <taxon>Metazoa</taxon>
        <taxon>Chordata</taxon>
        <taxon>Craniata</taxon>
        <taxon>Vertebrata</taxon>
        <taxon>Euteleostomi</taxon>
        <taxon>Mammalia</taxon>
        <taxon>Eutheria</taxon>
        <taxon>Euarchontoglires</taxon>
        <taxon>Glires</taxon>
        <taxon>Rodentia</taxon>
        <taxon>Myomorpha</taxon>
        <taxon>Muroidea</taxon>
        <taxon>Muridae</taxon>
        <taxon>Murinae</taxon>
        <taxon>Mus</taxon>
        <taxon>Mus</taxon>
    </lineage>
</organism>
<accession>Q9JKK8</accession>
<accession>Q3TBS8</accession>
<accession>Q3TNX3</accession>
<accession>Q3TZM6</accession>
<accession>Q3UT26</accession>
<accession>Q3V1V6</accession>
<accession>Q571L3</accession>
<name>ATR_MOUSE</name>
<feature type="chain" id="PRO_0000088845" description="Serine/threonine-protein kinase ATR">
    <location>
        <begin position="1"/>
        <end position="2635"/>
    </location>
</feature>
<feature type="repeat" description="HEAT 1">
    <location>
        <begin position="799"/>
        <end position="835"/>
    </location>
</feature>
<feature type="repeat" description="HEAT 2">
    <location>
        <begin position="1329"/>
        <end position="1365"/>
    </location>
</feature>
<feature type="domain" description="FAT" evidence="3">
    <location>
        <begin position="1634"/>
        <end position="2179"/>
    </location>
</feature>
<feature type="domain" description="PI3K/PI4K catalytic" evidence="2">
    <location>
        <begin position="2287"/>
        <end position="2595"/>
    </location>
</feature>
<feature type="domain" description="FATC" evidence="3 4">
    <location>
        <begin position="2603"/>
        <end position="2635"/>
    </location>
</feature>
<feature type="region of interest" description="Disordered" evidence="5">
    <location>
        <begin position="423"/>
        <end position="447"/>
    </location>
</feature>
<feature type="region of interest" description="G-loop" evidence="2">
    <location>
        <begin position="2293"/>
        <end position="2299"/>
    </location>
</feature>
<feature type="region of interest" description="Catalytic loop" evidence="2">
    <location>
        <begin position="2463"/>
        <end position="2471"/>
    </location>
</feature>
<feature type="region of interest" description="Activation loop" evidence="2">
    <location>
        <begin position="2483"/>
        <end position="2507"/>
    </location>
</feature>
<feature type="modified residue" description="Phosphoserine" evidence="15">
    <location>
        <position position="431"/>
    </location>
</feature>
<feature type="modified residue" description="Phosphoserine" evidence="1">
    <location>
        <position position="438"/>
    </location>
</feature>
<feature type="modified residue" description="Phosphoserine" evidence="1">
    <location>
        <position position="439"/>
    </location>
</feature>
<feature type="sequence conflict" description="In Ref. 2; BAE24154/BAE34182/BAE42229." evidence="14" ref="2">
    <original>G</original>
    <variation>A</variation>
    <location>
        <position position="19"/>
    </location>
</feature>
<feature type="sequence conflict" description="In Ref. 2; BAE37964." evidence="14" ref="2">
    <original>D</original>
    <variation>E</variation>
    <location>
        <position position="2208"/>
    </location>
</feature>
<feature type="sequence conflict" description="In Ref. 2; BAE37964." evidence="14" ref="2">
    <original>R</original>
    <variation>C</variation>
    <location>
        <position position="2347"/>
    </location>
</feature>
<feature type="sequence conflict" description="In Ref. 2; BAE21043 and 3; BAD90361." evidence="14" ref="2 3">
    <original>G</original>
    <variation>W</variation>
    <location>
        <position position="2556"/>
    </location>
</feature>
<feature type="sequence conflict" description="In Ref. 2; BAE21043." evidence="14" ref="2">
    <original>H</original>
    <variation>R</variation>
    <location>
        <position position="2563"/>
    </location>
</feature>
<protein>
    <recommendedName>
        <fullName>Serine/threonine-protein kinase ATR</fullName>
        <ecNumber>2.7.11.1</ecNumber>
    </recommendedName>
    <alternativeName>
        <fullName>Ataxia telangiectasia and Rad3-related protein</fullName>
    </alternativeName>
</protein>
<proteinExistence type="evidence at protein level"/>
<reference key="1">
    <citation type="journal article" date="2009" name="PLoS Biol.">
        <title>Lineage-specific biology revealed by a finished genome assembly of the mouse.</title>
        <authorList>
            <person name="Church D.M."/>
            <person name="Goodstadt L."/>
            <person name="Hillier L.W."/>
            <person name="Zody M.C."/>
            <person name="Goldstein S."/>
            <person name="She X."/>
            <person name="Bult C.J."/>
            <person name="Agarwala R."/>
            <person name="Cherry J.L."/>
            <person name="DiCuccio M."/>
            <person name="Hlavina W."/>
            <person name="Kapustin Y."/>
            <person name="Meric P."/>
            <person name="Maglott D."/>
            <person name="Birtle Z."/>
            <person name="Marques A.C."/>
            <person name="Graves T."/>
            <person name="Zhou S."/>
            <person name="Teague B."/>
            <person name="Potamousis K."/>
            <person name="Churas C."/>
            <person name="Place M."/>
            <person name="Herschleb J."/>
            <person name="Runnheim R."/>
            <person name="Forrest D."/>
            <person name="Amos-Landgraf J."/>
            <person name="Schwartz D.C."/>
            <person name="Cheng Z."/>
            <person name="Lindblad-Toh K."/>
            <person name="Eichler E.E."/>
            <person name="Ponting C.P."/>
        </authorList>
    </citation>
    <scope>NUCLEOTIDE SEQUENCE [LARGE SCALE GENOMIC DNA]</scope>
    <source>
        <strain>C57BL/6J</strain>
    </source>
</reference>
<reference key="2">
    <citation type="journal article" date="2005" name="Science">
        <title>The transcriptional landscape of the mammalian genome.</title>
        <authorList>
            <person name="Carninci P."/>
            <person name="Kasukawa T."/>
            <person name="Katayama S."/>
            <person name="Gough J."/>
            <person name="Frith M.C."/>
            <person name="Maeda N."/>
            <person name="Oyama R."/>
            <person name="Ravasi T."/>
            <person name="Lenhard B."/>
            <person name="Wells C."/>
            <person name="Kodzius R."/>
            <person name="Shimokawa K."/>
            <person name="Bajic V.B."/>
            <person name="Brenner S.E."/>
            <person name="Batalov S."/>
            <person name="Forrest A.R."/>
            <person name="Zavolan M."/>
            <person name="Davis M.J."/>
            <person name="Wilming L.G."/>
            <person name="Aidinis V."/>
            <person name="Allen J.E."/>
            <person name="Ambesi-Impiombato A."/>
            <person name="Apweiler R."/>
            <person name="Aturaliya R.N."/>
            <person name="Bailey T.L."/>
            <person name="Bansal M."/>
            <person name="Baxter L."/>
            <person name="Beisel K.W."/>
            <person name="Bersano T."/>
            <person name="Bono H."/>
            <person name="Chalk A.M."/>
            <person name="Chiu K.P."/>
            <person name="Choudhary V."/>
            <person name="Christoffels A."/>
            <person name="Clutterbuck D.R."/>
            <person name="Crowe M.L."/>
            <person name="Dalla E."/>
            <person name="Dalrymple B.P."/>
            <person name="de Bono B."/>
            <person name="Della Gatta G."/>
            <person name="di Bernardo D."/>
            <person name="Down T."/>
            <person name="Engstrom P."/>
            <person name="Fagiolini M."/>
            <person name="Faulkner G."/>
            <person name="Fletcher C.F."/>
            <person name="Fukushima T."/>
            <person name="Furuno M."/>
            <person name="Futaki S."/>
            <person name="Gariboldi M."/>
            <person name="Georgii-Hemming P."/>
            <person name="Gingeras T.R."/>
            <person name="Gojobori T."/>
            <person name="Green R.E."/>
            <person name="Gustincich S."/>
            <person name="Harbers M."/>
            <person name="Hayashi Y."/>
            <person name="Hensch T.K."/>
            <person name="Hirokawa N."/>
            <person name="Hill D."/>
            <person name="Huminiecki L."/>
            <person name="Iacono M."/>
            <person name="Ikeo K."/>
            <person name="Iwama A."/>
            <person name="Ishikawa T."/>
            <person name="Jakt M."/>
            <person name="Kanapin A."/>
            <person name="Katoh M."/>
            <person name="Kawasawa Y."/>
            <person name="Kelso J."/>
            <person name="Kitamura H."/>
            <person name="Kitano H."/>
            <person name="Kollias G."/>
            <person name="Krishnan S.P."/>
            <person name="Kruger A."/>
            <person name="Kummerfeld S.K."/>
            <person name="Kurochkin I.V."/>
            <person name="Lareau L.F."/>
            <person name="Lazarevic D."/>
            <person name="Lipovich L."/>
            <person name="Liu J."/>
            <person name="Liuni S."/>
            <person name="McWilliam S."/>
            <person name="Madan Babu M."/>
            <person name="Madera M."/>
            <person name="Marchionni L."/>
            <person name="Matsuda H."/>
            <person name="Matsuzawa S."/>
            <person name="Miki H."/>
            <person name="Mignone F."/>
            <person name="Miyake S."/>
            <person name="Morris K."/>
            <person name="Mottagui-Tabar S."/>
            <person name="Mulder N."/>
            <person name="Nakano N."/>
            <person name="Nakauchi H."/>
            <person name="Ng P."/>
            <person name="Nilsson R."/>
            <person name="Nishiguchi S."/>
            <person name="Nishikawa S."/>
            <person name="Nori F."/>
            <person name="Ohara O."/>
            <person name="Okazaki Y."/>
            <person name="Orlando V."/>
            <person name="Pang K.C."/>
            <person name="Pavan W.J."/>
            <person name="Pavesi G."/>
            <person name="Pesole G."/>
            <person name="Petrovsky N."/>
            <person name="Piazza S."/>
            <person name="Reed J."/>
            <person name="Reid J.F."/>
            <person name="Ring B.Z."/>
            <person name="Ringwald M."/>
            <person name="Rost B."/>
            <person name="Ruan Y."/>
            <person name="Salzberg S.L."/>
            <person name="Sandelin A."/>
            <person name="Schneider C."/>
            <person name="Schoenbach C."/>
            <person name="Sekiguchi K."/>
            <person name="Semple C.A."/>
            <person name="Seno S."/>
            <person name="Sessa L."/>
            <person name="Sheng Y."/>
            <person name="Shibata Y."/>
            <person name="Shimada H."/>
            <person name="Shimada K."/>
            <person name="Silva D."/>
            <person name="Sinclair B."/>
            <person name="Sperling S."/>
            <person name="Stupka E."/>
            <person name="Sugiura K."/>
            <person name="Sultana R."/>
            <person name="Takenaka Y."/>
            <person name="Taki K."/>
            <person name="Tammoja K."/>
            <person name="Tan S.L."/>
            <person name="Tang S."/>
            <person name="Taylor M.S."/>
            <person name="Tegner J."/>
            <person name="Teichmann S.A."/>
            <person name="Ueda H.R."/>
            <person name="van Nimwegen E."/>
            <person name="Verardo R."/>
            <person name="Wei C.L."/>
            <person name="Yagi K."/>
            <person name="Yamanishi H."/>
            <person name="Zabarovsky E."/>
            <person name="Zhu S."/>
            <person name="Zimmer A."/>
            <person name="Hide W."/>
            <person name="Bult C."/>
            <person name="Grimmond S.M."/>
            <person name="Teasdale R.D."/>
            <person name="Liu E.T."/>
            <person name="Brusic V."/>
            <person name="Quackenbush J."/>
            <person name="Wahlestedt C."/>
            <person name="Mattick J.S."/>
            <person name="Hume D.A."/>
            <person name="Kai C."/>
            <person name="Sasaki D."/>
            <person name="Tomaru Y."/>
            <person name="Fukuda S."/>
            <person name="Kanamori-Katayama M."/>
            <person name="Suzuki M."/>
            <person name="Aoki J."/>
            <person name="Arakawa T."/>
            <person name="Iida J."/>
            <person name="Imamura K."/>
            <person name="Itoh M."/>
            <person name="Kato T."/>
            <person name="Kawaji H."/>
            <person name="Kawagashira N."/>
            <person name="Kawashima T."/>
            <person name="Kojima M."/>
            <person name="Kondo S."/>
            <person name="Konno H."/>
            <person name="Nakano K."/>
            <person name="Ninomiya N."/>
            <person name="Nishio T."/>
            <person name="Okada M."/>
            <person name="Plessy C."/>
            <person name="Shibata K."/>
            <person name="Shiraki T."/>
            <person name="Suzuki S."/>
            <person name="Tagami M."/>
            <person name="Waki K."/>
            <person name="Watahiki A."/>
            <person name="Okamura-Oho Y."/>
            <person name="Suzuki H."/>
            <person name="Kawai J."/>
            <person name="Hayashizaki Y."/>
        </authorList>
    </citation>
    <scope>NUCLEOTIDE SEQUENCE [LARGE SCALE MRNA] OF 1-1134 AND 1578-2635</scope>
    <source>
        <strain>C57BL/6J</strain>
        <strain>NOD</strain>
        <tissue>Brain</tissue>
        <tissue>Dendritic cell</tissue>
        <tissue>Egg</tissue>
        <tissue>Embryo</tissue>
        <tissue>Lung</tissue>
    </source>
</reference>
<reference key="3">
    <citation type="journal article" date="2004" name="DNA Res.">
        <title>Prediction of the coding sequences of mouse homologues of FLJ genes: the complete nucleotide sequences of 110 mouse FLJ-homologous cDNAs identified by screening of terminal sequences of cDNA clones randomly sampled from size-fractionated libraries.</title>
        <authorList>
            <person name="Okazaki N."/>
            <person name="Kikuno R."/>
            <person name="Ohara R."/>
            <person name="Inamoto S."/>
            <person name="Koseki H."/>
            <person name="Hiraoka S."/>
            <person name="Saga Y."/>
            <person name="Kitamura H."/>
            <person name="Nakagawa T."/>
            <person name="Nagase T."/>
            <person name="Ohara O."/>
            <person name="Koga H."/>
        </authorList>
    </citation>
    <scope>NUCLEOTIDE SEQUENCE [LARGE SCALE MRNA] OF 1684-2635</scope>
    <source>
        <tissue>Embryonic intestine</tissue>
    </source>
</reference>
<reference key="4">
    <citation type="journal article" date="2000" name="Curr. Biol.">
        <title>Targeted disruption of the cell-cycle checkpoint gene ATR leads to early embryonic lethality in mice.</title>
        <authorList>
            <person name="de Klein A."/>
            <person name="Muijtjens M."/>
            <person name="van Os R."/>
            <person name="Verhoeven Y."/>
            <person name="Smit B."/>
            <person name="Carr A.M."/>
            <person name="Lehmann A.R."/>
            <person name="Hoeijmakers J.H.J."/>
        </authorList>
    </citation>
    <scope>NUCLEOTIDE SEQUENCE [MRNA] OF 2362-2635</scope>
    <scope>FUNCTION</scope>
    <scope>DISRUPTION PHENOTYPE</scope>
</reference>
<reference key="5">
    <citation type="journal article" date="1996" name="Genes Dev.">
        <title>The Atr and Atm protein kinases associate with different sites along meiotically pairing chromosomes.</title>
        <authorList>
            <person name="Keegan K.S."/>
            <person name="Holtzman D.A."/>
            <person name="Plug A.W."/>
            <person name="Christenson E.R."/>
            <person name="Brainerd E.E."/>
            <person name="Flaggs G."/>
            <person name="Bentley N.J."/>
            <person name="Taylor E.M."/>
            <person name="Meyn M.S."/>
            <person name="Moss S.B."/>
            <person name="Carr A.M."/>
            <person name="Ashley T."/>
            <person name="Hoekstra M.F."/>
        </authorList>
    </citation>
    <scope>FUNCTION</scope>
    <scope>SUBCELLULAR LOCATION</scope>
    <scope>TISSUE SPECIFICITY</scope>
</reference>
<reference key="6">
    <citation type="journal article" date="2000" name="Genes Dev.">
        <title>ATR disruption leads to chromosomal fragmentation and early embryonic lethality.</title>
        <authorList>
            <person name="Brown E.J."/>
            <person name="Baltimore D."/>
        </authorList>
    </citation>
    <scope>FUNCTION</scope>
    <scope>DISRUPTION PHENOTYPE</scope>
</reference>
<reference key="7">
    <citation type="journal article" date="2003" name="Genes Dev.">
        <title>Essential and dispensable roles of ATR in cell cycle arrest and genome maintenance.</title>
        <authorList>
            <person name="Brown E.J."/>
            <person name="Baltimore D."/>
        </authorList>
    </citation>
    <scope>FUNCTION</scope>
</reference>
<reference key="8">
    <citation type="journal article" date="2010" name="Cell">
        <title>A tissue-specific atlas of mouse protein phosphorylation and expression.</title>
        <authorList>
            <person name="Huttlin E.L."/>
            <person name="Jedrychowski M.P."/>
            <person name="Elias J.E."/>
            <person name="Goswami T."/>
            <person name="Rad R."/>
            <person name="Beausoleil S.A."/>
            <person name="Villen J."/>
            <person name="Haas W."/>
            <person name="Sowa M.E."/>
            <person name="Gygi S.P."/>
        </authorList>
    </citation>
    <scope>PHOSPHORYLATION [LARGE SCALE ANALYSIS] AT SER-431</scope>
    <scope>IDENTIFICATION BY MASS SPECTROMETRY [LARGE SCALE ANALYSIS]</scope>
    <source>
        <tissue>Heart</tissue>
        <tissue>Pancreas</tissue>
        <tissue>Spleen</tissue>
        <tissue>Testis</tissue>
    </source>
</reference>
<reference key="9">
    <citation type="journal article" date="2010" name="Genes Dev.">
        <title>Tel2 structure and function in the Hsp90-dependent maturation of mTOR and ATR complexes.</title>
        <authorList>
            <person name="Takai H."/>
            <person name="Xie Y."/>
            <person name="de Lange T."/>
            <person name="Pavletich N.P."/>
        </authorList>
    </citation>
    <scope>INTERACTION WITH ATRIP</scope>
</reference>
<reference key="10">
    <citation type="journal article" date="2012" name="Genes Cells">
        <title>HORMAD2 is essential for synapsis surveillance during meiotic prophase via the recruitment of ATR activity.</title>
        <authorList>
            <person name="Kogo H."/>
            <person name="Tsutsumi M."/>
            <person name="Inagaki H."/>
            <person name="Ohye T."/>
            <person name="Kiyonari H."/>
            <person name="Kurahashi H."/>
        </authorList>
    </citation>
    <scope>SUBCELLULAR LOCATION</scope>
</reference>
<reference key="11">
    <citation type="journal article" date="2012" name="Genes Dev.">
        <title>Meiotic DNA double-strand breaks and chromosome asynapsis in mice are monitored by distinct HORMAD2-independent and -dependent mechanisms.</title>
        <authorList>
            <person name="Wojtasz L."/>
            <person name="Cloutier J.M."/>
            <person name="Baumann M."/>
            <person name="Daniel K."/>
            <person name="Varga J."/>
            <person name="Fu J."/>
            <person name="Anastassiadis K."/>
            <person name="Stewart A.F."/>
            <person name="Remenyi A."/>
            <person name="Turner J.M."/>
            <person name="Toth A."/>
        </authorList>
    </citation>
    <scope>SUBCELLULAR LOCATION</scope>
</reference>
<reference key="12">
    <citation type="journal article" date="2018" name="Cell Res.">
        <title>Mouse embryonic stem cells have increased capacity for replication fork restart driven by the specific Filia-Floped protein complex.</title>
        <authorList>
            <person name="Zhao B."/>
            <person name="Zhang W."/>
            <person name="Cun Y."/>
            <person name="Li J."/>
            <person name="Liu Y."/>
            <person name="Gao J."/>
            <person name="Zhu H."/>
            <person name="Zhou H."/>
            <person name="Zhang R."/>
            <person name="Zheng P."/>
        </authorList>
    </citation>
    <scope>FUNCTION</scope>
</reference>
<evidence type="ECO:0000250" key="1">
    <source>
        <dbReference type="UniProtKB" id="Q13535"/>
    </source>
</evidence>
<evidence type="ECO:0000255" key="2">
    <source>
        <dbReference type="PROSITE-ProRule" id="PRU00269"/>
    </source>
</evidence>
<evidence type="ECO:0000255" key="3">
    <source>
        <dbReference type="PROSITE-ProRule" id="PRU00534"/>
    </source>
</evidence>
<evidence type="ECO:0000255" key="4">
    <source>
        <dbReference type="PROSITE-ProRule" id="PRU00535"/>
    </source>
</evidence>
<evidence type="ECO:0000256" key="5">
    <source>
        <dbReference type="SAM" id="MobiDB-lite"/>
    </source>
</evidence>
<evidence type="ECO:0000269" key="6">
    <source>
    </source>
</evidence>
<evidence type="ECO:0000269" key="7">
    <source>
    </source>
</evidence>
<evidence type="ECO:0000269" key="8">
    <source>
    </source>
</evidence>
<evidence type="ECO:0000269" key="9">
    <source>
    </source>
</evidence>
<evidence type="ECO:0000269" key="10">
    <source>
    </source>
</evidence>
<evidence type="ECO:0000269" key="11">
    <source>
    </source>
</evidence>
<evidence type="ECO:0000269" key="12">
    <source>
    </source>
</evidence>
<evidence type="ECO:0000269" key="13">
    <source>
    </source>
</evidence>
<evidence type="ECO:0000305" key="14"/>
<evidence type="ECO:0007744" key="15">
    <source>
    </source>
</evidence>
<comment type="function">
    <text evidence="1 6 7 8 12 13">Serine/threonine protein kinase which activates checkpoint signaling upon genotoxic stresses such as ionizing radiation (IR), ultraviolet light (UV), or DNA replication stalling, thereby acting as a DNA damage sensor (PubMed:12629044, PubMed:8843195). Recognizes the substrate consensus sequence [ST]-Q (By similarity). Phosphorylates BRCA1, CHEK1, MCM2, RAD17, RBBP8, RPA2, SMC1 and p53/TP53, which collectively inhibit DNA replication and mitosis and promote DNA repair, recombination and apoptosis (PubMed:12629044, PubMed:8843195). Phosphorylates 'Ser-139' of histone variant H2AX at sites of DNA damage, thereby regulating DNA damage response mechanism (By similarity). Required for FANCD2 ubiquitination (By similarity). Critical for maintenance of fragile site stability and efficient regulation of centrosome duplication (By similarity). Acts as a regulator of the S-G2 transition by restricting the activity of CDK1 during S-phase to prevent premature entry into G2 (By similarity). Acts as a regulator of the nuclear envelope integrity in response to DNA damage and stress (By similarity). Acts as a mechanical stress sensor at the nuclear envelope: relocalizes to the nuclear envelope in response to mechanical stress and mediates a checkpoint via phosphorylation of CHEK1 (By similarity). Also promotes nuclear envelope rupture in response to DNA damage by mediating phosphorylation of LMNA at 'Ser-282', leading to lamin disassembly (By similarity). Involved in the inflammatory response to genome instability and double-stranded DNA breaks: acts by localizing to micronuclei arising from genome instability and catalyzing phosphorylation of LMNA at 'Ser-395', priming LMNA for subsequent phosphorylation by CDK1 and micronuclei envelope rupture (By similarity). The rupture of micronuclear envelope triggers the cGAS-STING pathway thereby activating the type I interferon response and innate immunity (By similarity). Positively regulates the restart of stalled replication forks following activation by the KHDC3L-OOEP scaffold complex (PubMed:29125140). Essential for preventing the occurrence of DNA damage during early embryogenesis (PubMed:10691732, PubMed:10801416).</text>
</comment>
<comment type="catalytic activity">
    <reaction evidence="1">
        <text>L-seryl-[protein] + ATP = O-phospho-L-seryl-[protein] + ADP + H(+)</text>
        <dbReference type="Rhea" id="RHEA:17989"/>
        <dbReference type="Rhea" id="RHEA-COMP:9863"/>
        <dbReference type="Rhea" id="RHEA-COMP:11604"/>
        <dbReference type="ChEBI" id="CHEBI:15378"/>
        <dbReference type="ChEBI" id="CHEBI:29999"/>
        <dbReference type="ChEBI" id="CHEBI:30616"/>
        <dbReference type="ChEBI" id="CHEBI:83421"/>
        <dbReference type="ChEBI" id="CHEBI:456216"/>
        <dbReference type="EC" id="2.7.11.1"/>
    </reaction>
    <physiologicalReaction direction="left-to-right" evidence="1">
        <dbReference type="Rhea" id="RHEA:17990"/>
    </physiologicalReaction>
</comment>
<comment type="catalytic activity">
    <reaction evidence="1">
        <text>L-threonyl-[protein] + ATP = O-phospho-L-threonyl-[protein] + ADP + H(+)</text>
        <dbReference type="Rhea" id="RHEA:46608"/>
        <dbReference type="Rhea" id="RHEA-COMP:11060"/>
        <dbReference type="Rhea" id="RHEA-COMP:11605"/>
        <dbReference type="ChEBI" id="CHEBI:15378"/>
        <dbReference type="ChEBI" id="CHEBI:30013"/>
        <dbReference type="ChEBI" id="CHEBI:30616"/>
        <dbReference type="ChEBI" id="CHEBI:61977"/>
        <dbReference type="ChEBI" id="CHEBI:456216"/>
        <dbReference type="EC" id="2.7.11.1"/>
    </reaction>
    <physiologicalReaction direction="left-to-right" evidence="1">
        <dbReference type="Rhea" id="RHEA:46609"/>
    </physiologicalReaction>
</comment>
<comment type="cofactor">
    <cofactor evidence="1">
        <name>Mn(2+)</name>
        <dbReference type="ChEBI" id="CHEBI:29035"/>
    </cofactor>
</comment>
<comment type="activity regulation">
    <text evidence="1">Serine/threonine-protein kinase activity is directly stimulated by TOPBP1. ATR kinase activity is also directly activated by ETAA1, independently of TOPBP1. Activated by DNA and inhibited by BCR-ABL oncogene. Slightly activated by ATRIP.</text>
</comment>
<comment type="subunit">
    <text evidence="1 9">Forms a heterodimer with ATRIP, forming the ATR-ATRIP complex (PubMed:20801936). Present in a complex containing ATRIP and RPA-coated single-stranded DNA (By similarity). Binds to DNA, and to UV-damaged DNA with higher affinity (By similarity). Interacts with MSH2 and HDAC2 (By similarity). Present in a complex containing CHD4 and HDAC2 (By similarity). Interacts with EEF1E1, the interaction is enhanced by UV irradiation (By similarity). Interacts with CLSPN and CEP164 (By similarity). Interacts with TELO2 and TTI1 (By similarity). Interacts with BCR-ABL after genotoxic stress (By similarity). Interacts with UHRF2; this interaction promotes ATR activation (By similarity). Interacts (when phosphorylated) with TOPBP1; leading to ATR activation by TOPBP1 (By similarity).</text>
</comment>
<comment type="interaction">
    <interactant intactId="EBI-1202426">
        <id>Q9JKK8</id>
    </interactant>
    <interactant intactId="EBI-5235246">
        <id>Q8BMG1</id>
        <label>Atrip</label>
    </interactant>
    <organismsDiffer>false</organismsDiffer>
    <experiments>2</experiments>
</comment>
<comment type="subcellular location">
    <subcellularLocation>
        <location evidence="1">Nucleus</location>
    </subcellularLocation>
    <subcellularLocation>
        <location evidence="10 11 13">Chromosome</location>
    </subcellularLocation>
    <subcellularLocation>
        <location evidence="1">Nucleus envelope</location>
    </subcellularLocation>
    <text evidence="1">Depending on the cell type, it can also be found in PML nuclear bodies. Recruited to chromatin during S-phase. Redistributes to discrete nuclear foci upon DNA damage, hypoxia or replication fork stalling. Relocalizes to the nuclear envelope in response to mechanical stress or DNA damage. Also localizes to the micronuclear envelope in response to response to genome instability.</text>
</comment>
<comment type="tissue specificity">
    <text evidence="13">Ubiquitous. Expression is highest in testis, where it is restricted to primary spermatocytes. Expression decreases as spermiogenesis proceeds (at protein level).</text>
</comment>
<comment type="PTM">
    <text evidence="1">Phosphorylated; autophosphorylates in vitro.</text>
</comment>
<comment type="disruption phenotype">
    <text evidence="6 7">Early embryonic lethality.</text>
</comment>
<comment type="similarity">
    <text evidence="14">Belongs to the PI3/PI4-kinase family. ATM subfamily.</text>
</comment>
<keyword id="KW-0067">ATP-binding</keyword>
<keyword id="KW-0158">Chromosome</keyword>
<keyword id="KW-0227">DNA damage</keyword>
<keyword id="KW-0234">DNA repair</keyword>
<keyword id="KW-0238">DNA-binding</keyword>
<keyword id="KW-0418">Kinase</keyword>
<keyword id="KW-0464">Manganese</keyword>
<keyword id="KW-0547">Nucleotide-binding</keyword>
<keyword id="KW-0539">Nucleus</keyword>
<keyword id="KW-0597">Phosphoprotein</keyword>
<keyword id="KW-1185">Reference proteome</keyword>
<keyword id="KW-0677">Repeat</keyword>
<keyword id="KW-0723">Serine/threonine-protein kinase</keyword>
<keyword id="KW-0808">Transferase</keyword>
<dbReference type="EC" id="2.7.11.1"/>
<dbReference type="EMBL" id="AC091531">
    <property type="status" value="NOT_ANNOTATED_CDS"/>
    <property type="molecule type" value="Genomic_DNA"/>
</dbReference>
<dbReference type="EMBL" id="AC121499">
    <property type="status" value="NOT_ANNOTATED_CDS"/>
    <property type="molecule type" value="Genomic_DNA"/>
</dbReference>
<dbReference type="EMBL" id="AK132223">
    <property type="protein sequence ID" value="BAE21043.1"/>
    <property type="molecule type" value="mRNA"/>
</dbReference>
<dbReference type="EMBL" id="AK139834">
    <property type="protein sequence ID" value="BAE24154.1"/>
    <property type="molecule type" value="mRNA"/>
</dbReference>
<dbReference type="EMBL" id="AK157754">
    <property type="protein sequence ID" value="BAE34182.1"/>
    <property type="molecule type" value="mRNA"/>
</dbReference>
<dbReference type="EMBL" id="AK164916">
    <property type="protein sequence ID" value="BAE37964.1"/>
    <property type="molecule type" value="mRNA"/>
</dbReference>
<dbReference type="EMBL" id="AK171072">
    <property type="protein sequence ID" value="BAE42229.1"/>
    <property type="molecule type" value="mRNA"/>
</dbReference>
<dbReference type="EMBL" id="AK220176">
    <property type="protein sequence ID" value="BAD90361.1"/>
    <property type="molecule type" value="mRNA"/>
</dbReference>
<dbReference type="EMBL" id="AF236887">
    <property type="protein sequence ID" value="AAF61728.1"/>
    <property type="molecule type" value="mRNA"/>
</dbReference>
<dbReference type="SMR" id="Q9JKK8"/>
<dbReference type="ComplexPortal" id="CPX-3623">
    <property type="entry name" value="ATR-ATRIP DNA damage-sensing kinase complex"/>
</dbReference>
<dbReference type="FunCoup" id="Q9JKK8">
    <property type="interactions" value="3091"/>
</dbReference>
<dbReference type="IntAct" id="Q9JKK8">
    <property type="interactions" value="2"/>
</dbReference>
<dbReference type="STRING" id="10090.ENSMUSP00000149953"/>
<dbReference type="GlyGen" id="Q9JKK8">
    <property type="glycosylation" value="2 sites, 1 O-linked glycan (1 site)"/>
</dbReference>
<dbReference type="iPTMnet" id="Q9JKK8"/>
<dbReference type="PhosphoSitePlus" id="Q9JKK8"/>
<dbReference type="PaxDb" id="10090-ENSMUSP00000034980"/>
<dbReference type="ProteomicsDB" id="277199"/>
<dbReference type="Pumba" id="Q9JKK8"/>
<dbReference type="AGR" id="MGI:108028"/>
<dbReference type="MGI" id="MGI:108028">
    <property type="gene designation" value="Atr"/>
</dbReference>
<dbReference type="eggNOG" id="KOG0890">
    <property type="taxonomic scope" value="Eukaryota"/>
</dbReference>
<dbReference type="InParanoid" id="Q9JKK8"/>
<dbReference type="PhylomeDB" id="Q9JKK8"/>
<dbReference type="Reactome" id="R-MMU-176187">
    <property type="pathway name" value="Activation of ATR in response to replication stress"/>
</dbReference>
<dbReference type="Reactome" id="R-MMU-5685938">
    <property type="pathway name" value="HDR through Single Strand Annealing (SSA)"/>
</dbReference>
<dbReference type="Reactome" id="R-MMU-5693607">
    <property type="pathway name" value="Processing of DNA double-strand break ends"/>
</dbReference>
<dbReference type="Reactome" id="R-MMU-6783310">
    <property type="pathway name" value="Fanconi Anemia Pathway"/>
</dbReference>
<dbReference type="Reactome" id="R-MMU-6804756">
    <property type="pathway name" value="Regulation of TP53 Activity through Phosphorylation"/>
</dbReference>
<dbReference type="Reactome" id="R-MMU-69473">
    <property type="pathway name" value="G2/M DNA damage checkpoint"/>
</dbReference>
<dbReference type="CD-CODE" id="2E092FC3">
    <property type="entry name" value="PML body"/>
</dbReference>
<dbReference type="ChiTaRS" id="Atr">
    <property type="organism name" value="mouse"/>
</dbReference>
<dbReference type="PRO" id="PR:Q9JKK8"/>
<dbReference type="Proteomes" id="UP000000589">
    <property type="component" value="Unplaced"/>
</dbReference>
<dbReference type="RNAct" id="Q9JKK8">
    <property type="molecule type" value="protein"/>
</dbReference>
<dbReference type="GO" id="GO:0070310">
    <property type="term" value="C:ATR-ATRIP complex"/>
    <property type="evidence" value="ECO:0000353"/>
    <property type="project" value="ComplexPortal"/>
</dbReference>
<dbReference type="GO" id="GO:0005694">
    <property type="term" value="C:chromosome"/>
    <property type="evidence" value="ECO:0000314"/>
    <property type="project" value="UniProtKB"/>
</dbReference>
<dbReference type="GO" id="GO:0098850">
    <property type="term" value="C:extrinsic component of synaptic vesicle membrane"/>
    <property type="evidence" value="ECO:0000314"/>
    <property type="project" value="SynGO"/>
</dbReference>
<dbReference type="GO" id="GO:0098982">
    <property type="term" value="C:GABA-ergic synapse"/>
    <property type="evidence" value="ECO:0000314"/>
    <property type="project" value="SynGO"/>
</dbReference>
<dbReference type="GO" id="GO:0001673">
    <property type="term" value="C:male germ cell nucleus"/>
    <property type="evidence" value="ECO:0000314"/>
    <property type="project" value="MGI"/>
</dbReference>
<dbReference type="GO" id="GO:0005635">
    <property type="term" value="C:nuclear envelope"/>
    <property type="evidence" value="ECO:0000250"/>
    <property type="project" value="UniProtKB"/>
</dbReference>
<dbReference type="GO" id="GO:0005654">
    <property type="term" value="C:nucleoplasm"/>
    <property type="evidence" value="ECO:0000304"/>
    <property type="project" value="Reactome"/>
</dbReference>
<dbReference type="GO" id="GO:0005634">
    <property type="term" value="C:nucleus"/>
    <property type="evidence" value="ECO:0000304"/>
    <property type="project" value="MGI"/>
</dbReference>
<dbReference type="GO" id="GO:0016605">
    <property type="term" value="C:PML body"/>
    <property type="evidence" value="ECO:0000250"/>
    <property type="project" value="UniProtKB"/>
</dbReference>
<dbReference type="GO" id="GO:0098794">
    <property type="term" value="C:postsynapse"/>
    <property type="evidence" value="ECO:0000314"/>
    <property type="project" value="SynGO"/>
</dbReference>
<dbReference type="GO" id="GO:0090734">
    <property type="term" value="C:site of DNA damage"/>
    <property type="evidence" value="ECO:0000250"/>
    <property type="project" value="UniProtKB"/>
</dbReference>
<dbReference type="GO" id="GO:0001741">
    <property type="term" value="C:XY body"/>
    <property type="evidence" value="ECO:0000314"/>
    <property type="project" value="MGI"/>
</dbReference>
<dbReference type="GO" id="GO:0005524">
    <property type="term" value="F:ATP binding"/>
    <property type="evidence" value="ECO:0007669"/>
    <property type="project" value="UniProtKB-KW"/>
</dbReference>
<dbReference type="GO" id="GO:0003677">
    <property type="term" value="F:DNA binding"/>
    <property type="evidence" value="ECO:0007669"/>
    <property type="project" value="UniProtKB-KW"/>
</dbReference>
<dbReference type="GO" id="GO:0035979">
    <property type="term" value="F:histone H2AXS139 kinase activity"/>
    <property type="evidence" value="ECO:0000250"/>
    <property type="project" value="UniProtKB"/>
</dbReference>
<dbReference type="GO" id="GO:0032405">
    <property type="term" value="F:MutLalpha complex binding"/>
    <property type="evidence" value="ECO:0000266"/>
    <property type="project" value="MGI"/>
</dbReference>
<dbReference type="GO" id="GO:0032407">
    <property type="term" value="F:MutSalpha complex binding"/>
    <property type="evidence" value="ECO:0000266"/>
    <property type="project" value="MGI"/>
</dbReference>
<dbReference type="GO" id="GO:0004672">
    <property type="term" value="F:protein kinase activity"/>
    <property type="evidence" value="ECO:0000314"/>
    <property type="project" value="MGI"/>
</dbReference>
<dbReference type="GO" id="GO:0106310">
    <property type="term" value="F:protein serine kinase activity"/>
    <property type="evidence" value="ECO:0007669"/>
    <property type="project" value="RHEA"/>
</dbReference>
<dbReference type="GO" id="GO:0004674">
    <property type="term" value="F:protein serine/threonine kinase activity"/>
    <property type="evidence" value="ECO:0000250"/>
    <property type="project" value="UniProtKB"/>
</dbReference>
<dbReference type="GO" id="GO:0051276">
    <property type="term" value="P:chromosome organization"/>
    <property type="evidence" value="ECO:0000315"/>
    <property type="project" value="MGI"/>
</dbReference>
<dbReference type="GO" id="GO:0000077">
    <property type="term" value="P:DNA damage checkpoint signaling"/>
    <property type="evidence" value="ECO:0000315"/>
    <property type="project" value="MGI"/>
</dbReference>
<dbReference type="GO" id="GO:0006974">
    <property type="term" value="P:DNA damage response"/>
    <property type="evidence" value="ECO:0000314"/>
    <property type="project" value="MGI"/>
</dbReference>
<dbReference type="GO" id="GO:0006281">
    <property type="term" value="P:DNA repair"/>
    <property type="evidence" value="ECO:0000314"/>
    <property type="project" value="MGI"/>
</dbReference>
<dbReference type="GO" id="GO:0007566">
    <property type="term" value="P:embryo implantation"/>
    <property type="evidence" value="ECO:0000315"/>
    <property type="project" value="MGI"/>
</dbReference>
<dbReference type="GO" id="GO:0051081">
    <property type="term" value="P:nuclear membrane disassembly"/>
    <property type="evidence" value="ECO:0000250"/>
    <property type="project" value="UniProtKB"/>
</dbReference>
<dbReference type="GO" id="GO:0006139">
    <property type="term" value="P:nucleobase-containing compound metabolic process"/>
    <property type="evidence" value="ECO:0000303"/>
    <property type="project" value="ComplexPortal"/>
</dbReference>
<dbReference type="GO" id="GO:0032212">
    <property type="term" value="P:positive regulation of telomere maintenance via telomerase"/>
    <property type="evidence" value="ECO:0000315"/>
    <property type="project" value="BHF-UCL"/>
</dbReference>
<dbReference type="GO" id="GO:2000779">
    <property type="term" value="P:regulation of double-strand break repair"/>
    <property type="evidence" value="ECO:0000303"/>
    <property type="project" value="ComplexPortal"/>
</dbReference>
<dbReference type="GO" id="GO:0031297">
    <property type="term" value="P:replication fork processing"/>
    <property type="evidence" value="ECO:0000315"/>
    <property type="project" value="UniProtKB"/>
</dbReference>
<dbReference type="CDD" id="cd00892">
    <property type="entry name" value="PIKKc_ATR"/>
    <property type="match status" value="1"/>
</dbReference>
<dbReference type="FunFam" id="1.10.1070.11:FF:000009">
    <property type="entry name" value="Putative serine/threonine-protein kinase ATR"/>
    <property type="match status" value="1"/>
</dbReference>
<dbReference type="FunFam" id="1.25.10.10:FF:000149">
    <property type="entry name" value="Serine/threonine-protein kinase ATR"/>
    <property type="match status" value="1"/>
</dbReference>
<dbReference type="FunFam" id="1.25.40.10:FF:000142">
    <property type="entry name" value="Serine/threonine-protein kinase ATR"/>
    <property type="match status" value="1"/>
</dbReference>
<dbReference type="FunFam" id="3.30.1010.10:FF:000011">
    <property type="entry name" value="serine/threonine-protein kinase ATR"/>
    <property type="match status" value="1"/>
</dbReference>
<dbReference type="Gene3D" id="1.25.10.10">
    <property type="entry name" value="Leucine-rich Repeat Variant"/>
    <property type="match status" value="2"/>
</dbReference>
<dbReference type="Gene3D" id="1.10.1070.11">
    <property type="entry name" value="Phosphatidylinositol 3-/4-kinase, catalytic domain"/>
    <property type="match status" value="1"/>
</dbReference>
<dbReference type="Gene3D" id="3.30.1010.10">
    <property type="entry name" value="Phosphatidylinositol 3-kinase Catalytic Subunit, Chain A, domain 4"/>
    <property type="match status" value="1"/>
</dbReference>
<dbReference type="Gene3D" id="1.25.40.10">
    <property type="entry name" value="Tetratricopeptide repeat domain"/>
    <property type="match status" value="1"/>
</dbReference>
<dbReference type="InterPro" id="IPR011989">
    <property type="entry name" value="ARM-like"/>
</dbReference>
<dbReference type="InterPro" id="IPR016024">
    <property type="entry name" value="ARM-type_fold"/>
</dbReference>
<dbReference type="InterPro" id="IPR056802">
    <property type="entry name" value="ATR-like_M-HEAT"/>
</dbReference>
<dbReference type="InterPro" id="IPR056803">
    <property type="entry name" value="ATR-like_N-HEAT"/>
</dbReference>
<dbReference type="InterPro" id="IPR050517">
    <property type="entry name" value="DDR_Repair_Kinase"/>
</dbReference>
<dbReference type="InterPro" id="IPR003152">
    <property type="entry name" value="FATC_dom"/>
</dbReference>
<dbReference type="InterPro" id="IPR021133">
    <property type="entry name" value="HEAT_type_2"/>
</dbReference>
<dbReference type="InterPro" id="IPR011009">
    <property type="entry name" value="Kinase-like_dom_sf"/>
</dbReference>
<dbReference type="InterPro" id="IPR000403">
    <property type="entry name" value="PI3/4_kinase_cat_dom"/>
</dbReference>
<dbReference type="InterPro" id="IPR036940">
    <property type="entry name" value="PI3/4_kinase_cat_sf"/>
</dbReference>
<dbReference type="InterPro" id="IPR018936">
    <property type="entry name" value="PI3/4_kinase_CS"/>
</dbReference>
<dbReference type="InterPro" id="IPR003151">
    <property type="entry name" value="PIK-rel_kinase_FAT"/>
</dbReference>
<dbReference type="InterPro" id="IPR014009">
    <property type="entry name" value="PIK_FAT"/>
</dbReference>
<dbReference type="InterPro" id="IPR011990">
    <property type="entry name" value="TPR-like_helical_dom_sf"/>
</dbReference>
<dbReference type="InterPro" id="IPR012993">
    <property type="entry name" value="UME"/>
</dbReference>
<dbReference type="PANTHER" id="PTHR11139">
    <property type="entry name" value="ATAXIA TELANGIECTASIA MUTATED ATM -RELATED"/>
    <property type="match status" value="1"/>
</dbReference>
<dbReference type="PANTHER" id="PTHR11139:SF69">
    <property type="entry name" value="SERINE_THREONINE-PROTEIN KINASE ATR"/>
    <property type="match status" value="1"/>
</dbReference>
<dbReference type="Pfam" id="PF02259">
    <property type="entry name" value="FAT"/>
    <property type="match status" value="1"/>
</dbReference>
<dbReference type="Pfam" id="PF02260">
    <property type="entry name" value="FATC"/>
    <property type="match status" value="1"/>
</dbReference>
<dbReference type="Pfam" id="PF23593">
    <property type="entry name" value="HEAT_ATR"/>
    <property type="match status" value="1"/>
</dbReference>
<dbReference type="Pfam" id="PF25030">
    <property type="entry name" value="M-HEAT_ATR"/>
    <property type="match status" value="1"/>
</dbReference>
<dbReference type="Pfam" id="PF25032">
    <property type="entry name" value="N-HEAT_ATR"/>
    <property type="match status" value="1"/>
</dbReference>
<dbReference type="Pfam" id="PF00454">
    <property type="entry name" value="PI3_PI4_kinase"/>
    <property type="match status" value="1"/>
</dbReference>
<dbReference type="Pfam" id="PF08064">
    <property type="entry name" value="UME"/>
    <property type="match status" value="1"/>
</dbReference>
<dbReference type="SMART" id="SM01343">
    <property type="entry name" value="FATC"/>
    <property type="match status" value="1"/>
</dbReference>
<dbReference type="SMART" id="SM00146">
    <property type="entry name" value="PI3Kc"/>
    <property type="match status" value="1"/>
</dbReference>
<dbReference type="SMART" id="SM00802">
    <property type="entry name" value="UME"/>
    <property type="match status" value="1"/>
</dbReference>
<dbReference type="SUPFAM" id="SSF48371">
    <property type="entry name" value="ARM repeat"/>
    <property type="match status" value="1"/>
</dbReference>
<dbReference type="SUPFAM" id="SSF56112">
    <property type="entry name" value="Protein kinase-like (PK-like)"/>
    <property type="match status" value="1"/>
</dbReference>
<dbReference type="SUPFAM" id="SSF48452">
    <property type="entry name" value="TPR-like"/>
    <property type="match status" value="1"/>
</dbReference>
<dbReference type="PROSITE" id="PS51189">
    <property type="entry name" value="FAT"/>
    <property type="match status" value="1"/>
</dbReference>
<dbReference type="PROSITE" id="PS51190">
    <property type="entry name" value="FATC"/>
    <property type="match status" value="1"/>
</dbReference>
<dbReference type="PROSITE" id="PS50077">
    <property type="entry name" value="HEAT_REPEAT"/>
    <property type="match status" value="1"/>
</dbReference>
<dbReference type="PROSITE" id="PS00916">
    <property type="entry name" value="PI3_4_KINASE_2"/>
    <property type="match status" value="1"/>
</dbReference>
<dbReference type="PROSITE" id="PS50290">
    <property type="entry name" value="PI3_4_KINASE_3"/>
    <property type="match status" value="1"/>
</dbReference>
<sequence length="2635" mass="300224">MGDHGLELASMIPALRELGSATPEEYNTVVQKPRQILCQFIDRILTDVNVVALELVKKTDAQPTSVMLLDFIQHIMKSSPLMFVNVNGSQGQNEAKDSCIEFSHWIITRLLRIAATPSCHMLHKKICEVICSLLFLFKSKNPAIFGVLTRELLYLFEDLIYLHKRNAVGEVMEWPVVVSRFLSRLDEHMGCLQPAPLQFMNVQNVEFIEVTLLMVLIHIVPTVFFRRQELLLWQIGCALLEHGSPKIRSLAISLLTELFELGGLPAQPASTFFSLFLELLQHLVGMDADQLKLYEEPLSKLLKTLFPFEAEAYRNIEPVYLNVLLEKLSVMFEDRVLMRLKSDLLKAALCHLLQYFLTFVPAGYESALQVRKVYVTNICRALVDALGVQKHVGYLLGPFYAALKMESKEIIERIQCQAQQENLSGNNDEVSPKRRKLSSSLSSYKKPSRQPEEIIHVDMDKKSILWNVLKQKAESLQISLECGTLKNSVAEALEGITVVLQLTALCTVHCSHQDMDGHNVKDHQHKYKKKPPVVVTWMSLDFYTKVLKSCRSLLESVQKLELELVIDSMVRICDALMYMQVKSSFKDHVLEELCGMLSLPWIYSYSDDNSLKMTTFATNLLPLSQRVWDSYSPQAQSKCVFLLTLFPRRIFLEWRTAVYNWALKSSHEVIRASCVKGFFILLHQQNSCNQIPKMLVDRVKDDSDMVKKEFASVLGQLVCTLHGMFYLSSSVEPCFEHMDLFSKNLKATSQHECSSSQVKASTCKPFLFLLTKNTPSPVKLAFIDNLHHLCKHLDFQEDEREVKAVLGTLLNLMEDPDKDVRIAFSGNIKYILESLNSEDGFVKELFVLRMKEAYTHAQIARNNELKDTLILTTGDIGRAAKGDLIPFALLHLLHCLLSKSASVSGAAYTEIRALVAAKSVKLQNFFSQYKKPICQFLVESLHSSQMTALPSAPCQSSEIRKQDVAHHREMALNTLSEIANVFDFPDLNRFLTRTLQVLLPDLAAKASPAASALIRTLGKQLNVSRREILINNFKYIFSHLVCSCSKDELERALHYLKNETEIELGSLLRQDFQGLHNELLLRIGEHYQQVFNGLSILASFASSDDPYQGPRDITSPELMADYLQPKLLGILAFFNMQLLSSSVGIEDKKMALTSLMSLMKLMGPKHVSSVRVKMMTTLRTGLRFKDDFPELCCRAWDCFVRCLDHAYLGPLLSHVIVALLPLIHMQPKETAAIFHYLIIENRDAVQDFLHEIYFLPDHPELEKIKAVLQEYRKETSETTDLQTTLQLSMKAIQHENVDVRIHALTSLKETLYKNQEKLIKYATDSETVEPVISQLVTVILKGCQDANSQARLLCGECLGELGAIDPGRLDFSTTETQGKDFTFVTGVEDLSFAYGLLMELTRAYLAYADNSRAQDSAAYAIQELLSIYDCREMQSNGPGYQLWKRFPEHVREILEPHLNTRYKSSQKSTDWSGVTKPIYLSKLGNNFAEWSSSWAGYLITKVRDNLASKIFTCCSIMMKHDFKVTIYLLPHILVYVLLGCNQEDQQEVYAEIMAVLKHDEQHAISTQDSASDLCQLSTQTVFSVLDHLTQWARHKFQALNAEKLAQNKPKGVSNVNFEDYQSVTRFLDLIPQDTLAVASFRSKAYTRAVMHFESFITEKKQNIQKHLGFLQKLYAAMHEPDGVAGVSAIRKAEPSLKEQILEHESIGLLRDATACYDRAIQLEPDQIIHYHGVVKSMLGLGQLSTVITQVNGVHANRSEWTDELNTYRVEAAWKLSQWDLVENYLAADGKSTTWSVRLGQLLLSAKKRDTTTFYDTLKLVRAEQIVPLSAASFERGSYQRGYEFIVRLHMLCELEHSLKPLFRKSPGDSCNEDSLNWGARLEMTQNSYRAKEPILALRRALLSLNKRPDYNEMVGECWLQSARVARKAGHHQTAYNALLNAGESRLAELYVERAKWLWSKGDVHQALIVLQKGVELCFPENKSPSESKHMLIHGRATLLVGRFMEETANFESNAVMKKYKDVTLFLPEWEDGHFYLAKYYDKLMPMVTDNKMEKQGDLIRYIVLHFGRSLQYGNQFIYQSMPRMLSLWLDFGAKAYEWEKGGRSDRLQMRNDLAKINSVLTEHTNRLAPYQFLTAFSQLISRICHSHDEVFVVLMEIIAKVFLAYPQQAMWMMTAVSKSSYPMRVNRCKEILTKAIHMKKSLEKFVGDATRLTDKLLELCNKSVDGSNSTLSMSTHFKMLKRLVEDPTFSEILIPLQSVMIPTLPSVLGAHANHDPFPGHWAYLAGFDDVVEILSSLQKPKKISLKGSDGKFYIMMCKPKDDLRKDCRLMEFNSLINKSLRKDAESRRRELHIRTYAVIPLNDECGIIEWVNNTAGLRPILTKIYKEKGVYMTGKELRQCMLPKSAALSEKLKVFQELLLPRHPPVFHEWFLRTFPDPTSWYSSRSAYCRSTAVMSMVGYILGLGDRHGENILFDSFTGECVHVDFNCLFNKGETFEVPEIVPFRLTHNMVNGMGPMGTEGLFRRACEVTLRLMRDQREPLMSVLKTFLHDPLVEGSKPVKGHSKAPLNETGEVVNEKAKTHVLDIEQRLQGVIKTRNRVTGLPLSIEGHVHYLIQEATDENLLCQMYLGWTPYM</sequence>
<gene>
    <name type="primary">Atr</name>
    <name type="synonym">Kiaa4069</name>
</gene>